<name>ORCT_DROME</name>
<keyword id="KW-0325">Glycoprotein</keyword>
<keyword id="KW-0406">Ion transport</keyword>
<keyword id="KW-0472">Membrane</keyword>
<keyword id="KW-1185">Reference proteome</keyword>
<keyword id="KW-0812">Transmembrane</keyword>
<keyword id="KW-1133">Transmembrane helix</keyword>
<keyword id="KW-0813">Transport</keyword>
<proteinExistence type="evidence at protein level"/>
<sequence>MGYDDVITHLGEFGPYQKRIYYLLCLPAIVCAFHKLAGVFLLAKPDFRCALPYENGSIYELSPHLWNLSYPENERCSYYDVDYTEEYLNGSIPRSSNETKTCSSYVYDRSKYLNSAVTEWNLVCSRSLLSATSDSLFMLGVLLGSLIFGQMSDKLGRKPTFFASLVLQLIFGVLAAVAPEYFSYTISRMIVGATTSGVFLVAYVIALEMVGSSYRLFAGVAMQMFFSVGFMLTAGFAYFIHDWRWLQIAITLPGLLFLCYYWIIPESARWLLMKGRKDEAFVIIEKAAKENKVEVPNEIYEQLVDEVAEKKKQDEMAASQPAATVFDLLRYPNLRRKTLLIFFDWFVNSGVYYGLSWNTNNLGGNQLVNFMISGAVEIPGYTLLLFTLNRWGRRSILCGTMMVAGISLLATIFVPSDMNWLIVACAMIGKLAITSSYGTIYIFSAEQFPTVVRNVGLGASSMVARVGGILAPYLKLLGEIWRPLPLIICGALSLTAGLLSLLLPETLNKPMPETIEDGENFGKKPAPQETAEEGGTQELSGMLNGKSG</sequence>
<dbReference type="EMBL" id="Y12399">
    <property type="protein sequence ID" value="CAA73030.1"/>
    <property type="status" value="ALT_SEQ"/>
    <property type="molecule type" value="mRNA"/>
</dbReference>
<dbReference type="EMBL" id="Y12400">
    <property type="protein sequence ID" value="CAA73031.1"/>
    <property type="molecule type" value="mRNA"/>
</dbReference>
<dbReference type="EMBL" id="AE014297">
    <property type="protein sequence ID" value="AAF56271.1"/>
    <property type="molecule type" value="Genomic_DNA"/>
</dbReference>
<dbReference type="EMBL" id="AY058437">
    <property type="protein sequence ID" value="AAL13666.1"/>
    <property type="molecule type" value="mRNA"/>
</dbReference>
<dbReference type="RefSeq" id="NP_001262908.1">
    <property type="nucleotide sequence ID" value="NM_001275979.1"/>
</dbReference>
<dbReference type="RefSeq" id="NP_524479.1">
    <property type="nucleotide sequence ID" value="NM_079755.2"/>
</dbReference>
<dbReference type="SMR" id="Q9VCA2"/>
<dbReference type="BioGRID" id="67819">
    <property type="interactions" value="1"/>
</dbReference>
<dbReference type="FunCoup" id="Q9VCA2">
    <property type="interactions" value="35"/>
</dbReference>
<dbReference type="IntAct" id="Q9VCA2">
    <property type="interactions" value="1"/>
</dbReference>
<dbReference type="STRING" id="7227.FBpp0083983"/>
<dbReference type="TCDB" id="2.A.1.19.36">
    <property type="family name" value="the major facilitator superfamily (mfs)"/>
</dbReference>
<dbReference type="GlyCosmos" id="Q9VCA2">
    <property type="glycosylation" value="4 sites, No reported glycans"/>
</dbReference>
<dbReference type="GlyGen" id="Q9VCA2">
    <property type="glycosylation" value="4 sites"/>
</dbReference>
<dbReference type="iPTMnet" id="Q9VCA2"/>
<dbReference type="PaxDb" id="7227-FBpp0083983"/>
<dbReference type="DNASU" id="42891"/>
<dbReference type="EnsemblMetazoa" id="FBtr0084599">
    <property type="protein sequence ID" value="FBpp0083983"/>
    <property type="gene ID" value="FBgn0019952"/>
</dbReference>
<dbReference type="EnsemblMetazoa" id="FBtr0334870">
    <property type="protein sequence ID" value="FBpp0306893"/>
    <property type="gene ID" value="FBgn0019952"/>
</dbReference>
<dbReference type="GeneID" id="42891"/>
<dbReference type="KEGG" id="dme:Dmel_CG6331"/>
<dbReference type="AGR" id="FB:FBgn0019952"/>
<dbReference type="CTD" id="42891"/>
<dbReference type="FlyBase" id="FBgn0019952">
    <property type="gene designation" value="Orct"/>
</dbReference>
<dbReference type="VEuPathDB" id="VectorBase:FBgn0019952"/>
<dbReference type="eggNOG" id="KOG0255">
    <property type="taxonomic scope" value="Eukaryota"/>
</dbReference>
<dbReference type="GeneTree" id="ENSGT00940000167832"/>
<dbReference type="HOGENOM" id="CLU_001265_33_4_1"/>
<dbReference type="InParanoid" id="Q9VCA2"/>
<dbReference type="OMA" id="CALYACI"/>
<dbReference type="OrthoDB" id="3936150at2759"/>
<dbReference type="PhylomeDB" id="Q9VCA2"/>
<dbReference type="Reactome" id="R-DME-112311">
    <property type="pathway name" value="Neurotransmitter clearance"/>
</dbReference>
<dbReference type="Reactome" id="R-DME-181430">
    <property type="pathway name" value="Norepinephrine Neurotransmitter Release Cycle"/>
</dbReference>
<dbReference type="Reactome" id="R-DME-200425">
    <property type="pathway name" value="Carnitine shuttle"/>
</dbReference>
<dbReference type="Reactome" id="R-DME-2161517">
    <property type="pathway name" value="Abacavir transmembrane transport"/>
</dbReference>
<dbReference type="Reactome" id="R-DME-442660">
    <property type="pathway name" value="Na+/Cl- dependent neurotransmitter transporters"/>
</dbReference>
<dbReference type="Reactome" id="R-DME-549127">
    <property type="pathway name" value="Organic cation transport"/>
</dbReference>
<dbReference type="Reactome" id="R-DME-561048">
    <property type="pathway name" value="Organic anion transport"/>
</dbReference>
<dbReference type="Reactome" id="R-DME-917937">
    <property type="pathway name" value="Iron uptake and transport"/>
</dbReference>
<dbReference type="Reactome" id="R-DME-9749641">
    <property type="pathway name" value="Aspirin ADME"/>
</dbReference>
<dbReference type="Reactome" id="R-DME-9793528">
    <property type="pathway name" value="Ciprofloxacin ADME"/>
</dbReference>
<dbReference type="BioGRID-ORCS" id="42891">
    <property type="hits" value="0 hits in 3 CRISPR screens"/>
</dbReference>
<dbReference type="ChiTaRS" id="Orct">
    <property type="organism name" value="fly"/>
</dbReference>
<dbReference type="GenomeRNAi" id="42891"/>
<dbReference type="PRO" id="PR:Q9VCA2"/>
<dbReference type="Proteomes" id="UP000000803">
    <property type="component" value="Chromosome 3R"/>
</dbReference>
<dbReference type="Bgee" id="FBgn0019952">
    <property type="expression patterns" value="Expressed in saliva-secreting gland and 56 other cell types or tissues"/>
</dbReference>
<dbReference type="ExpressionAtlas" id="Q9VCA2">
    <property type="expression patterns" value="baseline and differential"/>
</dbReference>
<dbReference type="GO" id="GO:0016020">
    <property type="term" value="C:membrane"/>
    <property type="evidence" value="ECO:0000303"/>
    <property type="project" value="UniProtKB"/>
</dbReference>
<dbReference type="GO" id="GO:0022857">
    <property type="term" value="F:transmembrane transporter activity"/>
    <property type="evidence" value="ECO:0007669"/>
    <property type="project" value="InterPro"/>
</dbReference>
<dbReference type="GO" id="GO:0006915">
    <property type="term" value="P:apoptotic process"/>
    <property type="evidence" value="ECO:0000304"/>
    <property type="project" value="UniProtKB"/>
</dbReference>
<dbReference type="GO" id="GO:0006811">
    <property type="term" value="P:monoatomic ion transport"/>
    <property type="evidence" value="ECO:0007669"/>
    <property type="project" value="UniProtKB-KW"/>
</dbReference>
<dbReference type="CDD" id="cd17317">
    <property type="entry name" value="MFS_SLC22"/>
    <property type="match status" value="1"/>
</dbReference>
<dbReference type="FunFam" id="1.20.1250.20:FF:000553">
    <property type="entry name" value="Organic cation transporter protein"/>
    <property type="match status" value="1"/>
</dbReference>
<dbReference type="Gene3D" id="1.20.1250.20">
    <property type="entry name" value="MFS general substrate transporter like domains"/>
    <property type="match status" value="1"/>
</dbReference>
<dbReference type="InterPro" id="IPR020846">
    <property type="entry name" value="MFS_dom"/>
</dbReference>
<dbReference type="InterPro" id="IPR005828">
    <property type="entry name" value="MFS_sugar_transport-like"/>
</dbReference>
<dbReference type="InterPro" id="IPR036259">
    <property type="entry name" value="MFS_trans_sf"/>
</dbReference>
<dbReference type="PANTHER" id="PTHR24064">
    <property type="entry name" value="SOLUTE CARRIER FAMILY 22 MEMBER"/>
    <property type="match status" value="1"/>
</dbReference>
<dbReference type="Pfam" id="PF00083">
    <property type="entry name" value="Sugar_tr"/>
    <property type="match status" value="1"/>
</dbReference>
<dbReference type="SUPFAM" id="SSF103473">
    <property type="entry name" value="MFS general substrate transporter"/>
    <property type="match status" value="1"/>
</dbReference>
<dbReference type="PROSITE" id="PS50850">
    <property type="entry name" value="MFS"/>
    <property type="match status" value="1"/>
</dbReference>
<protein>
    <recommendedName>
        <fullName>Organic cation transporter protein</fullName>
    </recommendedName>
</protein>
<accession>Q9VCA2</accession>
<accession>O01383</accession>
<accession>O01384</accession>
<organism>
    <name type="scientific">Drosophila melanogaster</name>
    <name type="common">Fruit fly</name>
    <dbReference type="NCBI Taxonomy" id="7227"/>
    <lineage>
        <taxon>Eukaryota</taxon>
        <taxon>Metazoa</taxon>
        <taxon>Ecdysozoa</taxon>
        <taxon>Arthropoda</taxon>
        <taxon>Hexapoda</taxon>
        <taxon>Insecta</taxon>
        <taxon>Pterygota</taxon>
        <taxon>Neoptera</taxon>
        <taxon>Endopterygota</taxon>
        <taxon>Diptera</taxon>
        <taxon>Brachycera</taxon>
        <taxon>Muscomorpha</taxon>
        <taxon>Ephydroidea</taxon>
        <taxon>Drosophilidae</taxon>
        <taxon>Drosophila</taxon>
        <taxon>Sophophora</taxon>
    </lineage>
</organism>
<reference key="1">
    <citation type="journal article" date="1997" name="Gene">
        <title>The Orct gene of Drosophila melanogaster codes for a putative organic cation transporter with six or 12 transmembrane domains.</title>
        <authorList>
            <person name="Taylor C.A.M."/>
            <person name="Stanley K."/>
            <person name="Shirras A.D."/>
        </authorList>
    </citation>
    <scope>NUCLEOTIDE SEQUENCE [MRNA]</scope>
    <source>
        <tissue>Larva</tissue>
    </source>
</reference>
<reference key="2">
    <citation type="journal article" date="2000" name="Science">
        <title>The genome sequence of Drosophila melanogaster.</title>
        <authorList>
            <person name="Adams M.D."/>
            <person name="Celniker S.E."/>
            <person name="Holt R.A."/>
            <person name="Evans C.A."/>
            <person name="Gocayne J.D."/>
            <person name="Amanatides P.G."/>
            <person name="Scherer S.E."/>
            <person name="Li P.W."/>
            <person name="Hoskins R.A."/>
            <person name="Galle R.F."/>
            <person name="George R.A."/>
            <person name="Lewis S.E."/>
            <person name="Richards S."/>
            <person name="Ashburner M."/>
            <person name="Henderson S.N."/>
            <person name="Sutton G.G."/>
            <person name="Wortman J.R."/>
            <person name="Yandell M.D."/>
            <person name="Zhang Q."/>
            <person name="Chen L.X."/>
            <person name="Brandon R.C."/>
            <person name="Rogers Y.-H.C."/>
            <person name="Blazej R.G."/>
            <person name="Champe M."/>
            <person name="Pfeiffer B.D."/>
            <person name="Wan K.H."/>
            <person name="Doyle C."/>
            <person name="Baxter E.G."/>
            <person name="Helt G."/>
            <person name="Nelson C.R."/>
            <person name="Miklos G.L.G."/>
            <person name="Abril J.F."/>
            <person name="Agbayani A."/>
            <person name="An H.-J."/>
            <person name="Andrews-Pfannkoch C."/>
            <person name="Baldwin D."/>
            <person name="Ballew R.M."/>
            <person name="Basu A."/>
            <person name="Baxendale J."/>
            <person name="Bayraktaroglu L."/>
            <person name="Beasley E.M."/>
            <person name="Beeson K.Y."/>
            <person name="Benos P.V."/>
            <person name="Berman B.P."/>
            <person name="Bhandari D."/>
            <person name="Bolshakov S."/>
            <person name="Borkova D."/>
            <person name="Botchan M.R."/>
            <person name="Bouck J."/>
            <person name="Brokstein P."/>
            <person name="Brottier P."/>
            <person name="Burtis K.C."/>
            <person name="Busam D.A."/>
            <person name="Butler H."/>
            <person name="Cadieu E."/>
            <person name="Center A."/>
            <person name="Chandra I."/>
            <person name="Cherry J.M."/>
            <person name="Cawley S."/>
            <person name="Dahlke C."/>
            <person name="Davenport L.B."/>
            <person name="Davies P."/>
            <person name="de Pablos B."/>
            <person name="Delcher A."/>
            <person name="Deng Z."/>
            <person name="Mays A.D."/>
            <person name="Dew I."/>
            <person name="Dietz S.M."/>
            <person name="Dodson K."/>
            <person name="Doup L.E."/>
            <person name="Downes M."/>
            <person name="Dugan-Rocha S."/>
            <person name="Dunkov B.C."/>
            <person name="Dunn P."/>
            <person name="Durbin K.J."/>
            <person name="Evangelista C.C."/>
            <person name="Ferraz C."/>
            <person name="Ferriera S."/>
            <person name="Fleischmann W."/>
            <person name="Fosler C."/>
            <person name="Gabrielian A.E."/>
            <person name="Garg N.S."/>
            <person name="Gelbart W.M."/>
            <person name="Glasser K."/>
            <person name="Glodek A."/>
            <person name="Gong F."/>
            <person name="Gorrell J.H."/>
            <person name="Gu Z."/>
            <person name="Guan P."/>
            <person name="Harris M."/>
            <person name="Harris N.L."/>
            <person name="Harvey D.A."/>
            <person name="Heiman T.J."/>
            <person name="Hernandez J.R."/>
            <person name="Houck J."/>
            <person name="Hostin D."/>
            <person name="Houston K.A."/>
            <person name="Howland T.J."/>
            <person name="Wei M.-H."/>
            <person name="Ibegwam C."/>
            <person name="Jalali M."/>
            <person name="Kalush F."/>
            <person name="Karpen G.H."/>
            <person name="Ke Z."/>
            <person name="Kennison J.A."/>
            <person name="Ketchum K.A."/>
            <person name="Kimmel B.E."/>
            <person name="Kodira C.D."/>
            <person name="Kraft C.L."/>
            <person name="Kravitz S."/>
            <person name="Kulp D."/>
            <person name="Lai Z."/>
            <person name="Lasko P."/>
            <person name="Lei Y."/>
            <person name="Levitsky A.A."/>
            <person name="Li J.H."/>
            <person name="Li Z."/>
            <person name="Liang Y."/>
            <person name="Lin X."/>
            <person name="Liu X."/>
            <person name="Mattei B."/>
            <person name="McIntosh T.C."/>
            <person name="McLeod M.P."/>
            <person name="McPherson D."/>
            <person name="Merkulov G."/>
            <person name="Milshina N.V."/>
            <person name="Mobarry C."/>
            <person name="Morris J."/>
            <person name="Moshrefi A."/>
            <person name="Mount S.M."/>
            <person name="Moy M."/>
            <person name="Murphy B."/>
            <person name="Murphy L."/>
            <person name="Muzny D.M."/>
            <person name="Nelson D.L."/>
            <person name="Nelson D.R."/>
            <person name="Nelson K.A."/>
            <person name="Nixon K."/>
            <person name="Nusskern D.R."/>
            <person name="Pacleb J.M."/>
            <person name="Palazzolo M."/>
            <person name="Pittman G.S."/>
            <person name="Pan S."/>
            <person name="Pollard J."/>
            <person name="Puri V."/>
            <person name="Reese M.G."/>
            <person name="Reinert K."/>
            <person name="Remington K."/>
            <person name="Saunders R.D.C."/>
            <person name="Scheeler F."/>
            <person name="Shen H."/>
            <person name="Shue B.C."/>
            <person name="Siden-Kiamos I."/>
            <person name="Simpson M."/>
            <person name="Skupski M.P."/>
            <person name="Smith T.J."/>
            <person name="Spier E."/>
            <person name="Spradling A.C."/>
            <person name="Stapleton M."/>
            <person name="Strong R."/>
            <person name="Sun E."/>
            <person name="Svirskas R."/>
            <person name="Tector C."/>
            <person name="Turner R."/>
            <person name="Venter E."/>
            <person name="Wang A.H."/>
            <person name="Wang X."/>
            <person name="Wang Z.-Y."/>
            <person name="Wassarman D.A."/>
            <person name="Weinstock G.M."/>
            <person name="Weissenbach J."/>
            <person name="Williams S.M."/>
            <person name="Woodage T."/>
            <person name="Worley K.C."/>
            <person name="Wu D."/>
            <person name="Yang S."/>
            <person name="Yao Q.A."/>
            <person name="Ye J."/>
            <person name="Yeh R.-F."/>
            <person name="Zaveri J.S."/>
            <person name="Zhan M."/>
            <person name="Zhang G."/>
            <person name="Zhao Q."/>
            <person name="Zheng L."/>
            <person name="Zheng X.H."/>
            <person name="Zhong F.N."/>
            <person name="Zhong W."/>
            <person name="Zhou X."/>
            <person name="Zhu S.C."/>
            <person name="Zhu X."/>
            <person name="Smith H.O."/>
            <person name="Gibbs R.A."/>
            <person name="Myers E.W."/>
            <person name="Rubin G.M."/>
            <person name="Venter J.C."/>
        </authorList>
    </citation>
    <scope>NUCLEOTIDE SEQUENCE [LARGE SCALE GENOMIC DNA]</scope>
    <source>
        <strain>Berkeley</strain>
    </source>
</reference>
<reference key="3">
    <citation type="journal article" date="2002" name="Genome Biol.">
        <title>Annotation of the Drosophila melanogaster euchromatic genome: a systematic review.</title>
        <authorList>
            <person name="Misra S."/>
            <person name="Crosby M.A."/>
            <person name="Mungall C.J."/>
            <person name="Matthews B.B."/>
            <person name="Campbell K.S."/>
            <person name="Hradecky P."/>
            <person name="Huang Y."/>
            <person name="Kaminker J.S."/>
            <person name="Millburn G.H."/>
            <person name="Prochnik S.E."/>
            <person name="Smith C.D."/>
            <person name="Tupy J.L."/>
            <person name="Whitfield E.J."/>
            <person name="Bayraktaroglu L."/>
            <person name="Berman B.P."/>
            <person name="Bettencourt B.R."/>
            <person name="Celniker S.E."/>
            <person name="de Grey A.D.N.J."/>
            <person name="Drysdale R.A."/>
            <person name="Harris N.L."/>
            <person name="Richter J."/>
            <person name="Russo S."/>
            <person name="Schroeder A.J."/>
            <person name="Shu S.Q."/>
            <person name="Stapleton M."/>
            <person name="Yamada C."/>
            <person name="Ashburner M."/>
            <person name="Gelbart W.M."/>
            <person name="Rubin G.M."/>
            <person name="Lewis S.E."/>
        </authorList>
    </citation>
    <scope>GENOME REANNOTATION</scope>
    <source>
        <strain>Berkeley</strain>
    </source>
</reference>
<reference key="4">
    <citation type="journal article" date="2002" name="Genome Biol.">
        <title>A Drosophila full-length cDNA resource.</title>
        <authorList>
            <person name="Stapleton M."/>
            <person name="Carlson J.W."/>
            <person name="Brokstein P."/>
            <person name="Yu C."/>
            <person name="Champe M."/>
            <person name="George R.A."/>
            <person name="Guarin H."/>
            <person name="Kronmiller B."/>
            <person name="Pacleb J.M."/>
            <person name="Park S."/>
            <person name="Wan K.H."/>
            <person name="Rubin G.M."/>
            <person name="Celniker S.E."/>
        </authorList>
    </citation>
    <scope>NUCLEOTIDE SEQUENCE [LARGE SCALE MRNA]</scope>
    <source>
        <strain>Berkeley</strain>
        <tissue>Head</tissue>
    </source>
</reference>
<reference key="5">
    <citation type="journal article" date="2009" name="Nat. Biotechnol.">
        <title>Mass-spectrometric identification and relative quantification of N-linked cell surface glycoproteins.</title>
        <authorList>
            <person name="Wollscheid B."/>
            <person name="Bausch-Fluck D."/>
            <person name="Henderson C."/>
            <person name="O'Brien R."/>
            <person name="Bibel M."/>
            <person name="Schiess R."/>
            <person name="Aebersold R."/>
            <person name="Watts J.D."/>
        </authorList>
    </citation>
    <scope>GLYCOSYLATION [LARGE SCALE ANALYSIS] AT ASN-97</scope>
    <scope>IDENTIFICATION BY MASS SPECTROMETRY</scope>
</reference>
<feature type="chain" id="PRO_0000220514" description="Organic cation transporter protein">
    <location>
        <begin position="1"/>
        <end position="548"/>
    </location>
</feature>
<feature type="topological domain" description="Cytoplasmic" evidence="2">
    <location>
        <begin position="1"/>
        <end position="22"/>
    </location>
</feature>
<feature type="transmembrane region" description="Helical; Name=1" evidence="2">
    <location>
        <begin position="23"/>
        <end position="43"/>
    </location>
</feature>
<feature type="topological domain" description="Extracellular" evidence="2">
    <location>
        <begin position="44"/>
        <end position="127"/>
    </location>
</feature>
<feature type="transmembrane region" description="Helical; Name=2" evidence="2">
    <location>
        <begin position="128"/>
        <end position="148"/>
    </location>
</feature>
<feature type="topological domain" description="Cytoplasmic" evidence="2">
    <location>
        <begin position="149"/>
        <end position="158"/>
    </location>
</feature>
<feature type="transmembrane region" description="Helical; Name=3" evidence="2">
    <location>
        <begin position="159"/>
        <end position="179"/>
    </location>
</feature>
<feature type="topological domain" description="Extracellular" evidence="2">
    <location>
        <begin position="180"/>
        <end position="189"/>
    </location>
</feature>
<feature type="transmembrane region" description="Helical; Name=4" evidence="2">
    <location>
        <begin position="190"/>
        <end position="210"/>
    </location>
</feature>
<feature type="topological domain" description="Cytoplasmic" evidence="2">
    <location>
        <begin position="211"/>
        <end position="219"/>
    </location>
</feature>
<feature type="transmembrane region" description="Helical; Name=5" evidence="2">
    <location>
        <begin position="220"/>
        <end position="240"/>
    </location>
</feature>
<feature type="topological domain" description="Extracellular" evidence="2">
    <location>
        <begin position="241"/>
        <end position="244"/>
    </location>
</feature>
<feature type="transmembrane region" description="Helical; Name=6" evidence="2">
    <location>
        <begin position="245"/>
        <end position="265"/>
    </location>
</feature>
<feature type="topological domain" description="Cytoplasmic" evidence="2">
    <location>
        <begin position="266"/>
        <end position="337"/>
    </location>
</feature>
<feature type="transmembrane region" description="Helical; Name=7" evidence="2">
    <location>
        <begin position="338"/>
        <end position="358"/>
    </location>
</feature>
<feature type="topological domain" description="Extracellular" evidence="2">
    <location>
        <begin position="359"/>
        <end position="366"/>
    </location>
</feature>
<feature type="transmembrane region" description="Helical; Name=8" evidence="2">
    <location>
        <begin position="367"/>
        <end position="387"/>
    </location>
</feature>
<feature type="topological domain" description="Cytoplasmic" evidence="2">
    <location>
        <begin position="388"/>
        <end position="395"/>
    </location>
</feature>
<feature type="transmembrane region" description="Helical; Name=9" evidence="2">
    <location>
        <begin position="396"/>
        <end position="416"/>
    </location>
</feature>
<feature type="topological domain" description="Extracellular" evidence="2">
    <location>
        <begin position="417"/>
        <end position="419"/>
    </location>
</feature>
<feature type="transmembrane region" description="Helical; Name=10" evidence="2">
    <location>
        <begin position="420"/>
        <end position="440"/>
    </location>
</feature>
<feature type="topological domain" description="Cytoplasmic" evidence="2">
    <location>
        <begin position="441"/>
        <end position="453"/>
    </location>
</feature>
<feature type="transmembrane region" description="Helical; Name=11" evidence="2">
    <location>
        <begin position="454"/>
        <end position="474"/>
    </location>
</feature>
<feature type="topological domain" description="Extracellular" evidence="2">
    <location>
        <begin position="475"/>
        <end position="482"/>
    </location>
</feature>
<feature type="transmembrane region" description="Helical; Name=12" evidence="2">
    <location>
        <begin position="483"/>
        <end position="503"/>
    </location>
</feature>
<feature type="topological domain" description="Cytoplasmic" evidence="2">
    <location>
        <begin position="504"/>
        <end position="548"/>
    </location>
</feature>
<feature type="region of interest" description="Disordered" evidence="3">
    <location>
        <begin position="512"/>
        <end position="548"/>
    </location>
</feature>
<feature type="glycosylation site" description="N-linked (GlcNAc...) asparagine" evidence="2">
    <location>
        <position position="55"/>
    </location>
</feature>
<feature type="glycosylation site" description="N-linked (GlcNAc...) asparagine" evidence="2">
    <location>
        <position position="67"/>
    </location>
</feature>
<feature type="glycosylation site" description="N-linked (GlcNAc...) asparagine" evidence="2">
    <location>
        <position position="89"/>
    </location>
</feature>
<feature type="glycosylation site" description="N-linked (GlcNAc...) asparagine" evidence="4">
    <location>
        <position position="97"/>
    </location>
</feature>
<feature type="sequence conflict" description="In Ref. 1; CAA73031." evidence="5" ref="1">
    <original>A</original>
    <variation>P</variation>
    <location>
        <position position="375"/>
    </location>
</feature>
<feature type="sequence conflict" description="In Ref. 1; CAA73031." evidence="5" ref="1">
    <original>L</original>
    <variation>F</variation>
    <location>
        <position position="385"/>
    </location>
</feature>
<feature type="sequence conflict" description="In Ref. 1; CAA73031." evidence="5" ref="1">
    <original>L</original>
    <variation>R</variation>
    <location>
        <position position="501"/>
    </location>
</feature>
<evidence type="ECO:0000250" key="1"/>
<evidence type="ECO:0000255" key="2"/>
<evidence type="ECO:0000256" key="3">
    <source>
        <dbReference type="SAM" id="MobiDB-lite"/>
    </source>
</evidence>
<evidence type="ECO:0000269" key="4">
    <source>
    </source>
</evidence>
<evidence type="ECO:0000305" key="5"/>
<gene>
    <name type="primary">Orct</name>
    <name type="ORF">CG6331</name>
</gene>
<comment type="function">
    <text evidence="1">Probably transports organic cations.</text>
</comment>
<comment type="subcellular location">
    <subcellularLocation>
        <location evidence="1">Membrane</location>
        <topology evidence="1">Multi-pass membrane protein</topology>
    </subcellularLocation>
</comment>
<comment type="tissue specificity">
    <text>Expressed in embryos and adults at low level. Expressed at higher level in third instar larvae.</text>
</comment>
<comment type="similarity">
    <text evidence="5">Belongs to the major facilitator (TC 2.A.1) superfamily. Organic cation transporter (TC 2.A.1.19) family.</text>
</comment>
<comment type="sequence caution" evidence="5">
    <conflict type="miscellaneous discrepancy">
        <sequence resource="EMBL-CDS" id="CAA73030"/>
    </conflict>
    <text>Chimeric cDNA.</text>
</comment>